<protein>
    <recommendedName>
        <fullName evidence="1">NADH-quinone oxidoreductase subunit D</fullName>
        <ecNumber evidence="1">7.1.1.-</ecNumber>
    </recommendedName>
    <alternativeName>
        <fullName evidence="1">NADH dehydrogenase I subunit D</fullName>
    </alternativeName>
    <alternativeName>
        <fullName evidence="1">NDH-1 subunit D</fullName>
    </alternativeName>
</protein>
<keyword id="KW-1003">Cell membrane</keyword>
<keyword id="KW-0472">Membrane</keyword>
<keyword id="KW-0520">NAD</keyword>
<keyword id="KW-0874">Quinone</keyword>
<keyword id="KW-1278">Translocase</keyword>
<keyword id="KW-0813">Transport</keyword>
<reference key="1">
    <citation type="journal article" date="2006" name="J. Bacteriol.">
        <title>Pathogenomic sequence analysis of Bacillus cereus and Bacillus thuringiensis isolates closely related to Bacillus anthracis.</title>
        <authorList>
            <person name="Han C.S."/>
            <person name="Xie G."/>
            <person name="Challacombe J.F."/>
            <person name="Altherr M.R."/>
            <person name="Bhotika S.S."/>
            <person name="Bruce D."/>
            <person name="Campbell C.S."/>
            <person name="Campbell M.L."/>
            <person name="Chen J."/>
            <person name="Chertkov O."/>
            <person name="Cleland C."/>
            <person name="Dimitrijevic M."/>
            <person name="Doggett N.A."/>
            <person name="Fawcett J.J."/>
            <person name="Glavina T."/>
            <person name="Goodwin L.A."/>
            <person name="Hill K.K."/>
            <person name="Hitchcock P."/>
            <person name="Jackson P.J."/>
            <person name="Keim P."/>
            <person name="Kewalramani A.R."/>
            <person name="Longmire J."/>
            <person name="Lucas S."/>
            <person name="Malfatti S."/>
            <person name="McMurry K."/>
            <person name="Meincke L.J."/>
            <person name="Misra M."/>
            <person name="Moseman B.L."/>
            <person name="Mundt M."/>
            <person name="Munk A.C."/>
            <person name="Okinaka R.T."/>
            <person name="Parson-Quintana B."/>
            <person name="Reilly L.P."/>
            <person name="Richardson P."/>
            <person name="Robinson D.L."/>
            <person name="Rubin E."/>
            <person name="Saunders E."/>
            <person name="Tapia R."/>
            <person name="Tesmer J.G."/>
            <person name="Thayer N."/>
            <person name="Thompson L.S."/>
            <person name="Tice H."/>
            <person name="Ticknor L.O."/>
            <person name="Wills P.L."/>
            <person name="Brettin T.S."/>
            <person name="Gilna P."/>
        </authorList>
    </citation>
    <scope>NUCLEOTIDE SEQUENCE [LARGE SCALE GENOMIC DNA]</scope>
    <source>
        <strain>ZK / E33L</strain>
    </source>
</reference>
<feature type="chain" id="PRO_0000357766" description="NADH-quinone oxidoreductase subunit D">
    <location>
        <begin position="1"/>
        <end position="366"/>
    </location>
</feature>
<organism>
    <name type="scientific">Bacillus cereus (strain ZK / E33L)</name>
    <dbReference type="NCBI Taxonomy" id="288681"/>
    <lineage>
        <taxon>Bacteria</taxon>
        <taxon>Bacillati</taxon>
        <taxon>Bacillota</taxon>
        <taxon>Bacilli</taxon>
        <taxon>Bacillales</taxon>
        <taxon>Bacillaceae</taxon>
        <taxon>Bacillus</taxon>
        <taxon>Bacillus cereus group</taxon>
    </lineage>
</organism>
<gene>
    <name evidence="1" type="primary">nuoD</name>
    <name type="ordered locus">BCE33L4997</name>
</gene>
<sequence length="366" mass="41572">MIRTEEMLLNVGPQHPSTHGVFRLVIKIDGEIIKEATPVIGYLHRGTEKIAESLQYTQIIPYTDRMDYLSAMTNNYVICHAVETMMGLEIPERAEYLRVLAMELGRIASHLVWWGTNLLDIGAVSPFLYAFREREMIINLLNELCGARLTFNYMRVGGVKWDAPDGWIEKVEEFVPYMREQLAGYHDLVSGNEIFLNRVKGVGIYSEEDAISYSLSGANLRCTGVNWDLRKDEPYSIYDRFDFHIPVGSVGDAWDRYVCRMQEIEESLKIVEQAVQQFPKEGAVLAKVPKIIKAPKGEAFVRIESPRGEIGCYIASDGKKEPYRLKFRRPSFYNLQILPKLLKGENIANLITILGGVDIVLGEVDG</sequence>
<dbReference type="EC" id="7.1.1.-" evidence="1"/>
<dbReference type="EMBL" id="CP000001">
    <property type="protein sequence ID" value="AAU15282.1"/>
    <property type="molecule type" value="Genomic_DNA"/>
</dbReference>
<dbReference type="RefSeq" id="WP_000621450.1">
    <property type="nucleotide sequence ID" value="NC_006274.1"/>
</dbReference>
<dbReference type="SMR" id="Q630V1"/>
<dbReference type="KEGG" id="bcz:BCE33L4997"/>
<dbReference type="PATRIC" id="fig|288681.22.peg.349"/>
<dbReference type="Proteomes" id="UP000002612">
    <property type="component" value="Chromosome"/>
</dbReference>
<dbReference type="GO" id="GO:0005886">
    <property type="term" value="C:plasma membrane"/>
    <property type="evidence" value="ECO:0007669"/>
    <property type="project" value="UniProtKB-SubCell"/>
</dbReference>
<dbReference type="GO" id="GO:0051287">
    <property type="term" value="F:NAD binding"/>
    <property type="evidence" value="ECO:0007669"/>
    <property type="project" value="InterPro"/>
</dbReference>
<dbReference type="GO" id="GO:0050136">
    <property type="term" value="F:NADH:ubiquinone reductase (non-electrogenic) activity"/>
    <property type="evidence" value="ECO:0007669"/>
    <property type="project" value="UniProtKB-UniRule"/>
</dbReference>
<dbReference type="GO" id="GO:0048038">
    <property type="term" value="F:quinone binding"/>
    <property type="evidence" value="ECO:0007669"/>
    <property type="project" value="UniProtKB-KW"/>
</dbReference>
<dbReference type="FunFam" id="1.10.645.10:FF:000006">
    <property type="entry name" value="NADH-quinone oxidoreductase subunit D"/>
    <property type="match status" value="1"/>
</dbReference>
<dbReference type="Gene3D" id="1.10.645.10">
    <property type="entry name" value="Cytochrome-c3 Hydrogenase, chain B"/>
    <property type="match status" value="1"/>
</dbReference>
<dbReference type="HAMAP" id="MF_01358">
    <property type="entry name" value="NDH1_NuoD"/>
    <property type="match status" value="1"/>
</dbReference>
<dbReference type="InterPro" id="IPR001135">
    <property type="entry name" value="NADH_Q_OxRdtase_suD"/>
</dbReference>
<dbReference type="InterPro" id="IPR022885">
    <property type="entry name" value="NDH1_su_D/H"/>
</dbReference>
<dbReference type="InterPro" id="IPR029014">
    <property type="entry name" value="NiFe-Hase_large"/>
</dbReference>
<dbReference type="NCBIfam" id="NF004739">
    <property type="entry name" value="PRK06075.1"/>
    <property type="match status" value="1"/>
</dbReference>
<dbReference type="NCBIfam" id="NF008974">
    <property type="entry name" value="PRK12322.1"/>
    <property type="match status" value="1"/>
</dbReference>
<dbReference type="PANTHER" id="PTHR11993:SF10">
    <property type="entry name" value="NADH DEHYDROGENASE [UBIQUINONE] IRON-SULFUR PROTEIN 2, MITOCHONDRIAL"/>
    <property type="match status" value="1"/>
</dbReference>
<dbReference type="PANTHER" id="PTHR11993">
    <property type="entry name" value="NADH-UBIQUINONE OXIDOREDUCTASE 49 KDA SUBUNIT"/>
    <property type="match status" value="1"/>
</dbReference>
<dbReference type="Pfam" id="PF00346">
    <property type="entry name" value="Complex1_49kDa"/>
    <property type="match status" value="2"/>
</dbReference>
<dbReference type="SUPFAM" id="SSF56762">
    <property type="entry name" value="HydB/Nqo4-like"/>
    <property type="match status" value="1"/>
</dbReference>
<proteinExistence type="inferred from homology"/>
<accession>Q630V1</accession>
<evidence type="ECO:0000255" key="1">
    <source>
        <dbReference type="HAMAP-Rule" id="MF_01358"/>
    </source>
</evidence>
<comment type="function">
    <text evidence="1">NDH-1 shuttles electrons from NADH, via FMN and iron-sulfur (Fe-S) centers, to quinones in the respiratory chain. The immediate electron acceptor for the enzyme in this species is believed to be a menaquinone. Couples the redox reaction to proton translocation (for every two electrons transferred, four hydrogen ions are translocated across the cytoplasmic membrane), and thus conserves the redox energy in a proton gradient.</text>
</comment>
<comment type="catalytic activity">
    <reaction evidence="1">
        <text>a quinone + NADH + 5 H(+)(in) = a quinol + NAD(+) + 4 H(+)(out)</text>
        <dbReference type="Rhea" id="RHEA:57888"/>
        <dbReference type="ChEBI" id="CHEBI:15378"/>
        <dbReference type="ChEBI" id="CHEBI:24646"/>
        <dbReference type="ChEBI" id="CHEBI:57540"/>
        <dbReference type="ChEBI" id="CHEBI:57945"/>
        <dbReference type="ChEBI" id="CHEBI:132124"/>
    </reaction>
</comment>
<comment type="subunit">
    <text evidence="1">NDH-1 is composed of 14 different subunits. Subunits NuoB, C, D, E, F, and G constitute the peripheral sector of the complex.</text>
</comment>
<comment type="subcellular location">
    <subcellularLocation>
        <location evidence="1">Cell membrane</location>
        <topology evidence="1">Peripheral membrane protein</topology>
        <orientation evidence="1">Cytoplasmic side</orientation>
    </subcellularLocation>
</comment>
<comment type="similarity">
    <text evidence="1">Belongs to the complex I 49 kDa subunit family.</text>
</comment>
<name>NUOD_BACCZ</name>